<geneLocation type="chloroplast"/>
<dbReference type="EMBL" id="AJ316582">
    <property type="protein sequence ID" value="CAC88026.1"/>
    <property type="molecule type" value="Genomic_DNA"/>
</dbReference>
<dbReference type="RefSeq" id="NP_783214.1">
    <property type="nucleotide sequence ID" value="NC_004561.1"/>
</dbReference>
<dbReference type="SMR" id="Q8S8Y5"/>
<dbReference type="GeneID" id="806549"/>
<dbReference type="GO" id="GO:0009507">
    <property type="term" value="C:chloroplast"/>
    <property type="evidence" value="ECO:0007669"/>
    <property type="project" value="UniProtKB-SubCell"/>
</dbReference>
<dbReference type="GO" id="GO:0005739">
    <property type="term" value="C:mitochondrion"/>
    <property type="evidence" value="ECO:0007669"/>
    <property type="project" value="GOC"/>
</dbReference>
<dbReference type="GO" id="GO:0015935">
    <property type="term" value="C:small ribosomal subunit"/>
    <property type="evidence" value="ECO:0007669"/>
    <property type="project" value="TreeGrafter"/>
</dbReference>
<dbReference type="GO" id="GO:0003735">
    <property type="term" value="F:structural constituent of ribosome"/>
    <property type="evidence" value="ECO:0007669"/>
    <property type="project" value="InterPro"/>
</dbReference>
<dbReference type="GO" id="GO:0032543">
    <property type="term" value="P:mitochondrial translation"/>
    <property type="evidence" value="ECO:0007669"/>
    <property type="project" value="TreeGrafter"/>
</dbReference>
<dbReference type="FunFam" id="3.30.1320.10:FF:000003">
    <property type="entry name" value="30S ribosomal protein S16, chloroplastic"/>
    <property type="match status" value="1"/>
</dbReference>
<dbReference type="Gene3D" id="3.30.1320.10">
    <property type="match status" value="1"/>
</dbReference>
<dbReference type="HAMAP" id="MF_00385">
    <property type="entry name" value="Ribosomal_bS16"/>
    <property type="match status" value="1"/>
</dbReference>
<dbReference type="InterPro" id="IPR000307">
    <property type="entry name" value="Ribosomal_bS16"/>
</dbReference>
<dbReference type="InterPro" id="IPR020592">
    <property type="entry name" value="Ribosomal_bS16_CS"/>
</dbReference>
<dbReference type="InterPro" id="IPR023803">
    <property type="entry name" value="Ribosomal_bS16_dom_sf"/>
</dbReference>
<dbReference type="NCBIfam" id="TIGR00002">
    <property type="entry name" value="S16"/>
    <property type="match status" value="1"/>
</dbReference>
<dbReference type="PANTHER" id="PTHR12919">
    <property type="entry name" value="30S RIBOSOMAL PROTEIN S16"/>
    <property type="match status" value="1"/>
</dbReference>
<dbReference type="PANTHER" id="PTHR12919:SF20">
    <property type="entry name" value="SMALL RIBOSOMAL SUBUNIT PROTEIN BS16M"/>
    <property type="match status" value="1"/>
</dbReference>
<dbReference type="Pfam" id="PF00886">
    <property type="entry name" value="Ribosomal_S16"/>
    <property type="match status" value="1"/>
</dbReference>
<dbReference type="SUPFAM" id="SSF54565">
    <property type="entry name" value="Ribosomal protein S16"/>
    <property type="match status" value="1"/>
</dbReference>
<dbReference type="PROSITE" id="PS00732">
    <property type="entry name" value="RIBOSOMAL_S16"/>
    <property type="match status" value="1"/>
</dbReference>
<protein>
    <recommendedName>
        <fullName evidence="1">Small ribosomal subunit protein bS16c</fullName>
    </recommendedName>
    <alternativeName>
        <fullName evidence="2">30S ribosomal protein S16, chloroplastic</fullName>
    </alternativeName>
</protein>
<reference key="1">
    <citation type="journal article" date="2002" name="Mol. Biol. Evol.">
        <title>The plastid chromosome of Atropa belladonna and its comparison with that of Nicotiana tabacum: the role of RNA editing in generating divergence in the process of plant speciation.</title>
        <authorList>
            <person name="Schmitz-Linneweber C."/>
            <person name="Regel R."/>
            <person name="Du T.G."/>
            <person name="Hupfer H."/>
            <person name="Herrmann R.G."/>
            <person name="Maier R.M."/>
        </authorList>
    </citation>
    <scope>NUCLEOTIDE SEQUENCE [LARGE SCALE GENOMIC DNA]</scope>
    <source>
        <strain>cv. Ab5p(kan)</strain>
    </source>
</reference>
<accession>Q8S8Y5</accession>
<keyword id="KW-0150">Chloroplast</keyword>
<keyword id="KW-0934">Plastid</keyword>
<keyword id="KW-0687">Ribonucleoprotein</keyword>
<keyword id="KW-0689">Ribosomal protein</keyword>
<comment type="subcellular location">
    <subcellularLocation>
        <location>Plastid</location>
        <location>Chloroplast</location>
    </subcellularLocation>
</comment>
<comment type="similarity">
    <text evidence="1">Belongs to the bacterial ribosomal protein bS16 family.</text>
</comment>
<proteinExistence type="inferred from homology"/>
<name>RR16_ATRBE</name>
<feature type="chain" id="PRO_0000276938" description="Small ribosomal subunit protein bS16c">
    <location>
        <begin position="1"/>
        <end position="88"/>
    </location>
</feature>
<sequence length="88" mass="10320">MVKLRLKRCGRKQRAVYRIVAIDVRSRREGKDLRKVGFYDPIKNQTYLNVPAILYFLEKGAQPTGTVQDILKKAEVFKELRPNQPKFN</sequence>
<evidence type="ECO:0000255" key="1">
    <source>
        <dbReference type="HAMAP-Rule" id="MF_00385"/>
    </source>
</evidence>
<evidence type="ECO:0000305" key="2"/>
<gene>
    <name evidence="1" type="primary">rps16</name>
</gene>
<organism>
    <name type="scientific">Atropa belladonna</name>
    <name type="common">Belladonna</name>
    <name type="synonym">Deadly nightshade</name>
    <dbReference type="NCBI Taxonomy" id="33113"/>
    <lineage>
        <taxon>Eukaryota</taxon>
        <taxon>Viridiplantae</taxon>
        <taxon>Streptophyta</taxon>
        <taxon>Embryophyta</taxon>
        <taxon>Tracheophyta</taxon>
        <taxon>Spermatophyta</taxon>
        <taxon>Magnoliopsida</taxon>
        <taxon>eudicotyledons</taxon>
        <taxon>Gunneridae</taxon>
        <taxon>Pentapetalae</taxon>
        <taxon>asterids</taxon>
        <taxon>lamiids</taxon>
        <taxon>Solanales</taxon>
        <taxon>Solanaceae</taxon>
        <taxon>Solanoideae</taxon>
        <taxon>Hyoscyameae</taxon>
        <taxon>Atropa</taxon>
    </lineage>
</organism>